<evidence type="ECO:0000255" key="1">
    <source>
        <dbReference type="HAMAP-Rule" id="MF_01394"/>
    </source>
</evidence>
<dbReference type="EC" id="7.1.1.-" evidence="1"/>
<dbReference type="EMBL" id="CP000712">
    <property type="protein sequence ID" value="ABQ77902.1"/>
    <property type="molecule type" value="Genomic_DNA"/>
</dbReference>
<dbReference type="SMR" id="A5W192"/>
<dbReference type="KEGG" id="ppf:Pput_1746"/>
<dbReference type="eggNOG" id="COG0838">
    <property type="taxonomic scope" value="Bacteria"/>
</dbReference>
<dbReference type="HOGENOM" id="CLU_119549_2_1_6"/>
<dbReference type="GO" id="GO:0030964">
    <property type="term" value="C:NADH dehydrogenase complex"/>
    <property type="evidence" value="ECO:0007669"/>
    <property type="project" value="TreeGrafter"/>
</dbReference>
<dbReference type="GO" id="GO:0005886">
    <property type="term" value="C:plasma membrane"/>
    <property type="evidence" value="ECO:0007669"/>
    <property type="project" value="UniProtKB-SubCell"/>
</dbReference>
<dbReference type="GO" id="GO:0008137">
    <property type="term" value="F:NADH dehydrogenase (ubiquinone) activity"/>
    <property type="evidence" value="ECO:0007669"/>
    <property type="project" value="InterPro"/>
</dbReference>
<dbReference type="GO" id="GO:0050136">
    <property type="term" value="F:NADH:ubiquinone reductase (non-electrogenic) activity"/>
    <property type="evidence" value="ECO:0007669"/>
    <property type="project" value="UniProtKB-UniRule"/>
</dbReference>
<dbReference type="GO" id="GO:0048038">
    <property type="term" value="F:quinone binding"/>
    <property type="evidence" value="ECO:0007669"/>
    <property type="project" value="UniProtKB-KW"/>
</dbReference>
<dbReference type="FunFam" id="1.20.58.1610:FF:000003">
    <property type="entry name" value="NADH-quinone oxidoreductase subunit A"/>
    <property type="match status" value="1"/>
</dbReference>
<dbReference type="Gene3D" id="1.20.58.1610">
    <property type="entry name" value="NADH:ubiquinone/plastoquinone oxidoreductase, chain 3"/>
    <property type="match status" value="1"/>
</dbReference>
<dbReference type="HAMAP" id="MF_01394">
    <property type="entry name" value="NDH1_NuoA"/>
    <property type="match status" value="1"/>
</dbReference>
<dbReference type="InterPro" id="IPR023043">
    <property type="entry name" value="NAD(P)H_OxRDtase_bac/plastid"/>
</dbReference>
<dbReference type="InterPro" id="IPR000440">
    <property type="entry name" value="NADH_UbQ/plastoQ_OxRdtase_su3"/>
</dbReference>
<dbReference type="InterPro" id="IPR038430">
    <property type="entry name" value="NDAH_ubi_oxred_su3_sf"/>
</dbReference>
<dbReference type="PANTHER" id="PTHR11058:SF21">
    <property type="entry name" value="NADH-QUINONE OXIDOREDUCTASE SUBUNIT A"/>
    <property type="match status" value="1"/>
</dbReference>
<dbReference type="PANTHER" id="PTHR11058">
    <property type="entry name" value="NADH-UBIQUINONE OXIDOREDUCTASE CHAIN 3"/>
    <property type="match status" value="1"/>
</dbReference>
<dbReference type="Pfam" id="PF00507">
    <property type="entry name" value="Oxidored_q4"/>
    <property type="match status" value="1"/>
</dbReference>
<organism>
    <name type="scientific">Pseudomonas putida (strain ATCC 700007 / DSM 6899 / JCM 31910 / BCRC 17059 / LMG 24140 / F1)</name>
    <dbReference type="NCBI Taxonomy" id="351746"/>
    <lineage>
        <taxon>Bacteria</taxon>
        <taxon>Pseudomonadati</taxon>
        <taxon>Pseudomonadota</taxon>
        <taxon>Gammaproteobacteria</taxon>
        <taxon>Pseudomonadales</taxon>
        <taxon>Pseudomonadaceae</taxon>
        <taxon>Pseudomonas</taxon>
    </lineage>
</organism>
<keyword id="KW-0997">Cell inner membrane</keyword>
<keyword id="KW-1003">Cell membrane</keyword>
<keyword id="KW-0472">Membrane</keyword>
<keyword id="KW-0520">NAD</keyword>
<keyword id="KW-0874">Quinone</keyword>
<keyword id="KW-1278">Translocase</keyword>
<keyword id="KW-0812">Transmembrane</keyword>
<keyword id="KW-1133">Transmembrane helix</keyword>
<keyword id="KW-0813">Transport</keyword>
<keyword id="KW-0830">Ubiquinone</keyword>
<comment type="function">
    <text evidence="1">NDH-1 shuttles electrons from NADH, via FMN and iron-sulfur (Fe-S) centers, to quinones in the respiratory chain. The immediate electron acceptor for the enzyme in this species is believed to be ubiquinone. Couples the redox reaction to proton translocation (for every two electrons transferred, four hydrogen ions are translocated across the cytoplasmic membrane), and thus conserves the redox energy in a proton gradient.</text>
</comment>
<comment type="catalytic activity">
    <reaction evidence="1">
        <text>a quinone + NADH + 5 H(+)(in) = a quinol + NAD(+) + 4 H(+)(out)</text>
        <dbReference type="Rhea" id="RHEA:57888"/>
        <dbReference type="ChEBI" id="CHEBI:15378"/>
        <dbReference type="ChEBI" id="CHEBI:24646"/>
        <dbReference type="ChEBI" id="CHEBI:57540"/>
        <dbReference type="ChEBI" id="CHEBI:57945"/>
        <dbReference type="ChEBI" id="CHEBI:132124"/>
    </reaction>
</comment>
<comment type="subunit">
    <text evidence="1">NDH-1 is composed of 13 different subunits. Subunits NuoA, H, J, K, L, M, N constitute the membrane sector of the complex.</text>
</comment>
<comment type="subcellular location">
    <subcellularLocation>
        <location evidence="1">Cell inner membrane</location>
        <topology evidence="1">Multi-pass membrane protein</topology>
    </subcellularLocation>
</comment>
<comment type="similarity">
    <text evidence="1">Belongs to the complex I subunit 3 family.</text>
</comment>
<reference key="1">
    <citation type="submission" date="2007-05" db="EMBL/GenBank/DDBJ databases">
        <title>Complete sequence of Pseudomonas putida F1.</title>
        <authorList>
            <consortium name="US DOE Joint Genome Institute"/>
            <person name="Copeland A."/>
            <person name="Lucas S."/>
            <person name="Lapidus A."/>
            <person name="Barry K."/>
            <person name="Detter J.C."/>
            <person name="Glavina del Rio T."/>
            <person name="Hammon N."/>
            <person name="Israni S."/>
            <person name="Dalin E."/>
            <person name="Tice H."/>
            <person name="Pitluck S."/>
            <person name="Chain P."/>
            <person name="Malfatti S."/>
            <person name="Shin M."/>
            <person name="Vergez L."/>
            <person name="Schmutz J."/>
            <person name="Larimer F."/>
            <person name="Land M."/>
            <person name="Hauser L."/>
            <person name="Kyrpides N."/>
            <person name="Lykidis A."/>
            <person name="Parales R."/>
            <person name="Richardson P."/>
        </authorList>
    </citation>
    <scope>NUCLEOTIDE SEQUENCE [LARGE SCALE GENOMIC DNA]</scope>
    <source>
        <strain>ATCC 700007 / DSM 6899 / JCM 31910 / BCRC 17059 / LMG 24140 / F1</strain>
    </source>
</reference>
<proteinExistence type="inferred from homology"/>
<accession>A5W192</accession>
<protein>
    <recommendedName>
        <fullName evidence="1">NADH-quinone oxidoreductase subunit A</fullName>
        <ecNumber evidence="1">7.1.1.-</ecNumber>
    </recommendedName>
    <alternativeName>
        <fullName evidence="1">NADH dehydrogenase I subunit A</fullName>
    </alternativeName>
    <alternativeName>
        <fullName evidence="1">NDH-1 subunit A</fullName>
    </alternativeName>
    <alternativeName>
        <fullName evidence="1">NUO1</fullName>
    </alternativeName>
</protein>
<sequence>MSDSAGLIAHNWGFAIFLLGVVGLCAFMLGLSSLLGSKAWGRAKNEPFESGMLPVGSARLRLSAKFYLVAMLFVIFDIEALFLFAWSVSVRESGWTGFVEALVFIAILLAGLVYLWRVGALDWAPEGRRKRQAKLKQ</sequence>
<gene>
    <name evidence="1" type="primary">nuoA</name>
    <name type="ordered locus">Pput_1746</name>
</gene>
<feature type="chain" id="PRO_0000362741" description="NADH-quinone oxidoreductase subunit A">
    <location>
        <begin position="1"/>
        <end position="137"/>
    </location>
</feature>
<feature type="transmembrane region" description="Helical" evidence="1">
    <location>
        <begin position="12"/>
        <end position="32"/>
    </location>
</feature>
<feature type="transmembrane region" description="Helical" evidence="1">
    <location>
        <begin position="66"/>
        <end position="86"/>
    </location>
</feature>
<feature type="transmembrane region" description="Helical" evidence="1">
    <location>
        <begin position="95"/>
        <end position="115"/>
    </location>
</feature>
<name>NUOA_PSEP1</name>